<sequence length="121" mass="13842">MGRIFLDHIGGTRLFSCANCDTILTNRSELISTRFTGATGRAFLFNKVVNLQYSEVQDRVMLTGRHMVRDVSCKNCNSKLGWIYEFATEDSQRYKEGRVILERALVRESEGFEEHVPSDNS</sequence>
<dbReference type="EMBL" id="BC103392">
    <property type="protein sequence ID" value="AAI03393.1"/>
    <property type="molecule type" value="mRNA"/>
</dbReference>
<dbReference type="RefSeq" id="NP_001073261.1">
    <property type="nucleotide sequence ID" value="NM_001079793.2"/>
</dbReference>
<dbReference type="RefSeq" id="XP_005212943.1">
    <property type="nucleotide sequence ID" value="XM_005212886.5"/>
</dbReference>
<dbReference type="RefSeq" id="XP_059747546.1">
    <property type="nucleotide sequence ID" value="XM_059891563.1"/>
</dbReference>
<dbReference type="SMR" id="Q3ZBE7"/>
<dbReference type="FunCoup" id="Q3ZBE7">
    <property type="interactions" value="3535"/>
</dbReference>
<dbReference type="STRING" id="9913.ENSBTAP00000032456"/>
<dbReference type="PaxDb" id="9913-ENSBTAP00000032456"/>
<dbReference type="Ensembl" id="ENSBTAT00000032525.2">
    <property type="protein sequence ID" value="ENSBTAP00000032456.1"/>
    <property type="gene ID" value="ENSBTAG00000023744.3"/>
</dbReference>
<dbReference type="GeneID" id="780856"/>
<dbReference type="KEGG" id="bta:780856"/>
<dbReference type="CTD" id="51646"/>
<dbReference type="VEuPathDB" id="HostDB:ENSBTAG00000023744"/>
<dbReference type="VGNC" id="VGNC:37037">
    <property type="gene designation" value="YPEL5"/>
</dbReference>
<dbReference type="eggNOG" id="KOG3399">
    <property type="taxonomic scope" value="Eukaryota"/>
</dbReference>
<dbReference type="GeneTree" id="ENSGT00940000154800"/>
<dbReference type="HOGENOM" id="CLU_043857_1_1_1"/>
<dbReference type="InParanoid" id="Q3ZBE7"/>
<dbReference type="OMA" id="YNCAACE"/>
<dbReference type="OrthoDB" id="6407410at2759"/>
<dbReference type="TreeFam" id="TF323378"/>
<dbReference type="Reactome" id="R-BTA-6798695">
    <property type="pathway name" value="Neutrophil degranulation"/>
</dbReference>
<dbReference type="Proteomes" id="UP000009136">
    <property type="component" value="Chromosome 11"/>
</dbReference>
<dbReference type="Bgee" id="ENSBTAG00000023744">
    <property type="expression patterns" value="Expressed in oocyte and 104 other cell types or tissues"/>
</dbReference>
<dbReference type="GO" id="GO:0005813">
    <property type="term" value="C:centrosome"/>
    <property type="evidence" value="ECO:0007669"/>
    <property type="project" value="UniProtKB-SubCell"/>
</dbReference>
<dbReference type="GO" id="GO:0005737">
    <property type="term" value="C:cytoplasm"/>
    <property type="evidence" value="ECO:0007669"/>
    <property type="project" value="UniProtKB-KW"/>
</dbReference>
<dbReference type="GO" id="GO:0030496">
    <property type="term" value="C:midbody"/>
    <property type="evidence" value="ECO:0000250"/>
    <property type="project" value="UniProtKB"/>
</dbReference>
<dbReference type="GO" id="GO:0097431">
    <property type="term" value="C:mitotic spindle pole"/>
    <property type="evidence" value="ECO:0000250"/>
    <property type="project" value="UniProtKB"/>
</dbReference>
<dbReference type="GO" id="GO:0005634">
    <property type="term" value="C:nucleus"/>
    <property type="evidence" value="ECO:0000250"/>
    <property type="project" value="UniProtKB"/>
</dbReference>
<dbReference type="GO" id="GO:0000151">
    <property type="term" value="C:ubiquitin ligase complex"/>
    <property type="evidence" value="ECO:0000318"/>
    <property type="project" value="GO_Central"/>
</dbReference>
<dbReference type="GO" id="GO:0046872">
    <property type="term" value="F:metal ion binding"/>
    <property type="evidence" value="ECO:0007669"/>
    <property type="project" value="UniProtKB-KW"/>
</dbReference>
<dbReference type="GO" id="GO:0008283">
    <property type="term" value="P:cell population proliferation"/>
    <property type="evidence" value="ECO:0000250"/>
    <property type="project" value="UniProtKB"/>
</dbReference>
<dbReference type="InterPro" id="IPR034751">
    <property type="entry name" value="Yippee"/>
</dbReference>
<dbReference type="InterPro" id="IPR004910">
    <property type="entry name" value="Yippee/Mis18/Cereblon"/>
</dbReference>
<dbReference type="InterPro" id="IPR039058">
    <property type="entry name" value="Yippee_fam"/>
</dbReference>
<dbReference type="PANTHER" id="PTHR13848">
    <property type="entry name" value="PROTEIN YIPPEE-LIKE CG15309-RELATED"/>
    <property type="match status" value="1"/>
</dbReference>
<dbReference type="Pfam" id="PF03226">
    <property type="entry name" value="Yippee-Mis18"/>
    <property type="match status" value="1"/>
</dbReference>
<dbReference type="PROSITE" id="PS51792">
    <property type="entry name" value="YIPPEE"/>
    <property type="match status" value="1"/>
</dbReference>
<protein>
    <recommendedName>
        <fullName>Protein yippee-like 5</fullName>
    </recommendedName>
</protein>
<proteinExistence type="evidence at transcript level"/>
<reference key="1">
    <citation type="submission" date="2005-08" db="EMBL/GenBank/DDBJ databases">
        <authorList>
            <consortium name="NIH - Mammalian Gene Collection (MGC) project"/>
        </authorList>
    </citation>
    <scope>NUCLEOTIDE SEQUENCE [LARGE SCALE MRNA]</scope>
    <source>
        <strain>Crossbred X Angus</strain>
        <tissue>Ileum</tissue>
    </source>
</reference>
<gene>
    <name type="primary">YPEL5</name>
</gene>
<feature type="chain" id="PRO_0000247553" description="Protein yippee-like 5">
    <location>
        <begin position="1"/>
        <end position="121"/>
    </location>
</feature>
<feature type="domain" description="Yippee" evidence="4">
    <location>
        <begin position="13"/>
        <end position="110"/>
    </location>
</feature>
<feature type="binding site" evidence="4">
    <location>
        <position position="17"/>
    </location>
    <ligand>
        <name>Zn(2+)</name>
        <dbReference type="ChEBI" id="CHEBI:29105"/>
    </ligand>
</feature>
<feature type="binding site" evidence="4">
    <location>
        <position position="20"/>
    </location>
    <ligand>
        <name>Zn(2+)</name>
        <dbReference type="ChEBI" id="CHEBI:29105"/>
    </ligand>
</feature>
<feature type="binding site" evidence="4">
    <location>
        <position position="73"/>
    </location>
    <ligand>
        <name>Zn(2+)</name>
        <dbReference type="ChEBI" id="CHEBI:29105"/>
    </ligand>
</feature>
<feature type="binding site" evidence="4">
    <location>
        <position position="76"/>
    </location>
    <ligand>
        <name>Zn(2+)</name>
        <dbReference type="ChEBI" id="CHEBI:29105"/>
    </ligand>
</feature>
<feature type="modified residue" description="Phosphoserine" evidence="2">
    <location>
        <position position="118"/>
    </location>
</feature>
<evidence type="ECO:0000250" key="1">
    <source>
        <dbReference type="UniProtKB" id="P62699"/>
    </source>
</evidence>
<evidence type="ECO:0000250" key="2">
    <source>
        <dbReference type="UniProtKB" id="P62700"/>
    </source>
</evidence>
<evidence type="ECO:0000250" key="3">
    <source>
        <dbReference type="UniProtKB" id="Q65Z55"/>
    </source>
</evidence>
<evidence type="ECO:0000255" key="4">
    <source>
        <dbReference type="PROSITE-ProRule" id="PRU01128"/>
    </source>
</evidence>
<evidence type="ECO:0000305" key="5"/>
<keyword id="KW-0963">Cytoplasm</keyword>
<keyword id="KW-0206">Cytoskeleton</keyword>
<keyword id="KW-0479">Metal-binding</keyword>
<keyword id="KW-0539">Nucleus</keyword>
<keyword id="KW-0597">Phosphoprotein</keyword>
<keyword id="KW-1185">Reference proteome</keyword>
<keyword id="KW-0862">Zinc</keyword>
<accession>Q3ZBE7</accession>
<comment type="function">
    <text evidence="1 3">Component of the CTLH E3 ubiquitin-protein ligase complex that selectively accepts ubiquitin from UBE2H and mediates ubiquitination and subsequent proteasomal degradation of the transcription factor HBP1 (By similarity). Required for normal cell proliferation (By similarity).</text>
</comment>
<comment type="subunit">
    <text evidence="1">Identified in the CTLH complex that contains GID4, RANBP9 and/or RANBP10, MKLN1, MAEA, RMND5A (or alternatively its paralog RMND5B), GID8, ARMC8, WDR26 and YPEL5. Within this complex, MAEA, RMND5A (or alternatively its paralog RMND5B), GID8, WDR26, and RANBP9 and/or RANBP10 form the catalytic core, while GID4, MKLN1, ARMC8 and YPEL5 have ancillary roles. Interacts with RANBP9 and RANBP10.</text>
</comment>
<comment type="subcellular location">
    <subcellularLocation>
        <location evidence="3">Nucleus</location>
    </subcellularLocation>
    <subcellularLocation>
        <location evidence="3">Cytoplasm</location>
        <location evidence="3">Cytoskeleton</location>
        <location evidence="3">Microtubule organizing center</location>
        <location evidence="3">Centrosome</location>
    </subcellularLocation>
    <subcellularLocation>
        <location evidence="3">Cytoplasm</location>
        <location evidence="3">Cytoskeleton</location>
        <location evidence="3">Spindle pole</location>
    </subcellularLocation>
    <subcellularLocation>
        <location evidence="3">Midbody</location>
    </subcellularLocation>
    <text evidence="3">Deteted in nucleus and at the centrosome during interphase. During mitosis, detected on the mitotic spindle, at spindle poles and at the midbody.</text>
</comment>
<comment type="similarity">
    <text evidence="5">Belongs to the yippee family.</text>
</comment>
<name>YPEL5_BOVIN</name>
<organism>
    <name type="scientific">Bos taurus</name>
    <name type="common">Bovine</name>
    <dbReference type="NCBI Taxonomy" id="9913"/>
    <lineage>
        <taxon>Eukaryota</taxon>
        <taxon>Metazoa</taxon>
        <taxon>Chordata</taxon>
        <taxon>Craniata</taxon>
        <taxon>Vertebrata</taxon>
        <taxon>Euteleostomi</taxon>
        <taxon>Mammalia</taxon>
        <taxon>Eutheria</taxon>
        <taxon>Laurasiatheria</taxon>
        <taxon>Artiodactyla</taxon>
        <taxon>Ruminantia</taxon>
        <taxon>Pecora</taxon>
        <taxon>Bovidae</taxon>
        <taxon>Bovinae</taxon>
        <taxon>Bos</taxon>
    </lineage>
</organism>